<dbReference type="EMBL" id="BC099747">
    <property type="protein sequence ID" value="AAH99747.1"/>
    <property type="molecule type" value="mRNA"/>
</dbReference>
<dbReference type="RefSeq" id="NP_001030112.1">
    <property type="nucleotide sequence ID" value="NM_001034940.1"/>
</dbReference>
<dbReference type="SMR" id="Q499V6"/>
<dbReference type="FunCoup" id="Q499V6">
    <property type="interactions" value="2483"/>
</dbReference>
<dbReference type="STRING" id="10116.ENSRNOP00000006780"/>
<dbReference type="iPTMnet" id="Q499V6"/>
<dbReference type="PhosphoSitePlus" id="Q499V6"/>
<dbReference type="PaxDb" id="10116-ENSRNOP00000006780"/>
<dbReference type="GeneID" id="362990"/>
<dbReference type="KEGG" id="rno:362990"/>
<dbReference type="AGR" id="RGD:1309851"/>
<dbReference type="CTD" id="85437"/>
<dbReference type="RGD" id="1309851">
    <property type="gene designation" value="Zcrb1"/>
</dbReference>
<dbReference type="VEuPathDB" id="HostDB:ENSRNOG00000004996"/>
<dbReference type="eggNOG" id="KOG0118">
    <property type="taxonomic scope" value="Eukaryota"/>
</dbReference>
<dbReference type="HOGENOM" id="CLU_059455_1_0_1"/>
<dbReference type="InParanoid" id="Q499V6"/>
<dbReference type="OrthoDB" id="78714at9989"/>
<dbReference type="PhylomeDB" id="Q499V6"/>
<dbReference type="TreeFam" id="TF106263"/>
<dbReference type="Reactome" id="R-RNO-72165">
    <property type="pathway name" value="mRNA Splicing - Minor Pathway"/>
</dbReference>
<dbReference type="PRO" id="PR:Q499V6"/>
<dbReference type="Proteomes" id="UP000002494">
    <property type="component" value="Chromosome 7"/>
</dbReference>
<dbReference type="Bgee" id="ENSRNOG00000004996">
    <property type="expression patterns" value="Expressed in quadriceps femoris and 19 other cell types or tissues"/>
</dbReference>
<dbReference type="GO" id="GO:0005654">
    <property type="term" value="C:nucleoplasm"/>
    <property type="evidence" value="ECO:0007669"/>
    <property type="project" value="UniProtKB-SubCell"/>
</dbReference>
<dbReference type="GO" id="GO:0005689">
    <property type="term" value="C:U12-type spliceosomal complex"/>
    <property type="evidence" value="ECO:0000266"/>
    <property type="project" value="RGD"/>
</dbReference>
<dbReference type="GO" id="GO:0003723">
    <property type="term" value="F:RNA binding"/>
    <property type="evidence" value="ECO:0007669"/>
    <property type="project" value="UniProtKB-KW"/>
</dbReference>
<dbReference type="GO" id="GO:0008270">
    <property type="term" value="F:zinc ion binding"/>
    <property type="evidence" value="ECO:0007669"/>
    <property type="project" value="UniProtKB-KW"/>
</dbReference>
<dbReference type="GO" id="GO:0000398">
    <property type="term" value="P:mRNA splicing, via spliceosome"/>
    <property type="evidence" value="ECO:0007669"/>
    <property type="project" value="InterPro"/>
</dbReference>
<dbReference type="CDD" id="cd12393">
    <property type="entry name" value="RRM_ZCRB1"/>
    <property type="match status" value="1"/>
</dbReference>
<dbReference type="FunFam" id="3.30.70.330:FF:000233">
    <property type="entry name" value="Zinc finger CCHC-type and RNA-binding motif-containing protein 1"/>
    <property type="match status" value="1"/>
</dbReference>
<dbReference type="FunFam" id="4.10.60.10:FF:000009">
    <property type="entry name" value="Zinc finger CCHC-type and RNA-binding motif-containing protein 1"/>
    <property type="match status" value="1"/>
</dbReference>
<dbReference type="Gene3D" id="3.30.70.330">
    <property type="match status" value="1"/>
</dbReference>
<dbReference type="Gene3D" id="4.10.60.10">
    <property type="entry name" value="Zinc finger, CCHC-type"/>
    <property type="match status" value="1"/>
</dbReference>
<dbReference type="InterPro" id="IPR012677">
    <property type="entry name" value="Nucleotide-bd_a/b_plait_sf"/>
</dbReference>
<dbReference type="InterPro" id="IPR035979">
    <property type="entry name" value="RBD_domain_sf"/>
</dbReference>
<dbReference type="InterPro" id="IPR000504">
    <property type="entry name" value="RRM_dom"/>
</dbReference>
<dbReference type="InterPro" id="IPR003954">
    <property type="entry name" value="RRM_dom_euk"/>
</dbReference>
<dbReference type="InterPro" id="IPR044598">
    <property type="entry name" value="ZCRB1"/>
</dbReference>
<dbReference type="InterPro" id="IPR034219">
    <property type="entry name" value="ZCRB1_RRM"/>
</dbReference>
<dbReference type="InterPro" id="IPR001878">
    <property type="entry name" value="Znf_CCHC"/>
</dbReference>
<dbReference type="InterPro" id="IPR036875">
    <property type="entry name" value="Znf_CCHC_sf"/>
</dbReference>
<dbReference type="PANTHER" id="PTHR46259">
    <property type="entry name" value="ZINC FINGER CCHC-TYPE AND RNA-BINDING MOTIF-CONTAINING PROTEIN 1"/>
    <property type="match status" value="1"/>
</dbReference>
<dbReference type="PANTHER" id="PTHR46259:SF1">
    <property type="entry name" value="ZINC FINGER CCHC-TYPE AND RNA-BINDING MOTIF-CONTAINING PROTEIN 1"/>
    <property type="match status" value="1"/>
</dbReference>
<dbReference type="Pfam" id="PF00076">
    <property type="entry name" value="RRM_1"/>
    <property type="match status" value="1"/>
</dbReference>
<dbReference type="Pfam" id="PF00098">
    <property type="entry name" value="zf-CCHC"/>
    <property type="match status" value="1"/>
</dbReference>
<dbReference type="SMART" id="SM00360">
    <property type="entry name" value="RRM"/>
    <property type="match status" value="1"/>
</dbReference>
<dbReference type="SMART" id="SM00361">
    <property type="entry name" value="RRM_1"/>
    <property type="match status" value="1"/>
</dbReference>
<dbReference type="SMART" id="SM00343">
    <property type="entry name" value="ZnF_C2HC"/>
    <property type="match status" value="1"/>
</dbReference>
<dbReference type="SUPFAM" id="SSF57756">
    <property type="entry name" value="Retrovirus zinc finger-like domains"/>
    <property type="match status" value="1"/>
</dbReference>
<dbReference type="SUPFAM" id="SSF54928">
    <property type="entry name" value="RNA-binding domain, RBD"/>
    <property type="match status" value="1"/>
</dbReference>
<dbReference type="PROSITE" id="PS50102">
    <property type="entry name" value="RRM"/>
    <property type="match status" value="1"/>
</dbReference>
<dbReference type="PROSITE" id="PS50158">
    <property type="entry name" value="ZF_CCHC"/>
    <property type="match status" value="1"/>
</dbReference>
<sequence>MSGGLAPSKSTVYVSNLPFSLTNNDLYRIFSKYGKVVKVTIMKDKDTRKSKGVAFILFLDKDSALNCTRAINNKQLFGRVIKASIAIDNGRAAEFIRRRNYFDKSKCYECGESGHLSYACPKNMLGEREPPKKKEKKKKKKVPEPEEEIEEVEVSEEEGEDPALDSLSQAIAFQQAKIEEEQNKWRPSTGGPSTSDDSRRPRIKKSAYFSDEEELSD</sequence>
<accession>Q499V6</accession>
<feature type="chain" id="PRO_0000252375" description="Zinc finger CCHC-type and RNA-binding motif-containing protein 1">
    <location>
        <begin position="1"/>
        <end position="217"/>
    </location>
</feature>
<feature type="domain" description="RRM" evidence="5">
    <location>
        <begin position="10"/>
        <end position="88"/>
    </location>
</feature>
<feature type="zinc finger region" description="CCHC-type" evidence="4">
    <location>
        <begin position="105"/>
        <end position="122"/>
    </location>
</feature>
<feature type="region of interest" description="Disordered" evidence="6">
    <location>
        <begin position="120"/>
        <end position="217"/>
    </location>
</feature>
<feature type="compositionally biased region" description="Acidic residues" evidence="6">
    <location>
        <begin position="145"/>
        <end position="163"/>
    </location>
</feature>
<feature type="modified residue" description="Phosphoserine" evidence="2">
    <location>
        <position position="155"/>
    </location>
</feature>
<feature type="modified residue" description="Phosphoserine" evidence="2">
    <location>
        <position position="210"/>
    </location>
</feature>
<feature type="modified residue" description="Phosphoserine" evidence="2">
    <location>
        <position position="216"/>
    </location>
</feature>
<protein>
    <recommendedName>
        <fullName>Zinc finger CCHC-type and RNA-binding motif-containing protein 1</fullName>
    </recommendedName>
    <alternativeName>
        <fullName>U11/U12 small nuclear ribonucleoprotein 31 kDa protein</fullName>
        <shortName>U11/U12 snRNP 31 kDa protein</shortName>
    </alternativeName>
</protein>
<name>ZCRB1_RAT</name>
<evidence type="ECO:0000250" key="1"/>
<evidence type="ECO:0000250" key="2">
    <source>
        <dbReference type="UniProtKB" id="Q8TBF4"/>
    </source>
</evidence>
<evidence type="ECO:0000250" key="3">
    <source>
        <dbReference type="UniProtKB" id="Q9CZ96"/>
    </source>
</evidence>
<evidence type="ECO:0000255" key="4">
    <source>
        <dbReference type="PROSITE-ProRule" id="PRU00047"/>
    </source>
</evidence>
<evidence type="ECO:0000255" key="5">
    <source>
        <dbReference type="PROSITE-ProRule" id="PRU00176"/>
    </source>
</evidence>
<evidence type="ECO:0000256" key="6">
    <source>
        <dbReference type="SAM" id="MobiDB-lite"/>
    </source>
</evidence>
<keyword id="KW-0479">Metal-binding</keyword>
<keyword id="KW-0507">mRNA processing</keyword>
<keyword id="KW-0508">mRNA splicing</keyword>
<keyword id="KW-0539">Nucleus</keyword>
<keyword id="KW-0597">Phosphoprotein</keyword>
<keyword id="KW-1185">Reference proteome</keyword>
<keyword id="KW-0694">RNA-binding</keyword>
<keyword id="KW-0747">Spliceosome</keyword>
<keyword id="KW-0862">Zinc</keyword>
<keyword id="KW-0863">Zinc-finger</keyword>
<comment type="subunit">
    <text evidence="1 3">Component of the U11/U12 snRNPs that are part of the U12-type spliceosome. Interacts with ZRSR1 (By similarity).</text>
</comment>
<comment type="subcellular location">
    <subcellularLocation>
        <location evidence="1">Nucleus</location>
        <location evidence="1">Nucleoplasm</location>
    </subcellularLocation>
</comment>
<reference key="1">
    <citation type="journal article" date="2004" name="Genome Res.">
        <title>The status, quality, and expansion of the NIH full-length cDNA project: the Mammalian Gene Collection (MGC).</title>
        <authorList>
            <consortium name="The MGC Project Team"/>
        </authorList>
    </citation>
    <scope>NUCLEOTIDE SEQUENCE [LARGE SCALE MRNA]</scope>
    <source>
        <tissue>Prostate</tissue>
    </source>
</reference>
<proteinExistence type="evidence at transcript level"/>
<organism>
    <name type="scientific">Rattus norvegicus</name>
    <name type="common">Rat</name>
    <dbReference type="NCBI Taxonomy" id="10116"/>
    <lineage>
        <taxon>Eukaryota</taxon>
        <taxon>Metazoa</taxon>
        <taxon>Chordata</taxon>
        <taxon>Craniata</taxon>
        <taxon>Vertebrata</taxon>
        <taxon>Euteleostomi</taxon>
        <taxon>Mammalia</taxon>
        <taxon>Eutheria</taxon>
        <taxon>Euarchontoglires</taxon>
        <taxon>Glires</taxon>
        <taxon>Rodentia</taxon>
        <taxon>Myomorpha</taxon>
        <taxon>Muroidea</taxon>
        <taxon>Muridae</taxon>
        <taxon>Murinae</taxon>
        <taxon>Rattus</taxon>
    </lineage>
</organism>
<gene>
    <name type="primary">Zcrb1</name>
</gene>